<feature type="chain" id="PRO_1000002718" description="Crossover junction endodeoxyribonuclease RuvC">
    <location>
        <begin position="1"/>
        <end position="183"/>
    </location>
</feature>
<feature type="active site" evidence="1">
    <location>
        <position position="16"/>
    </location>
</feature>
<feature type="active site" evidence="1">
    <location>
        <position position="75"/>
    </location>
</feature>
<feature type="active site" evidence="1">
    <location>
        <position position="147"/>
    </location>
</feature>
<feature type="binding site" evidence="1">
    <location>
        <position position="16"/>
    </location>
    <ligand>
        <name>Mg(2+)</name>
        <dbReference type="ChEBI" id="CHEBI:18420"/>
        <label>1</label>
    </ligand>
</feature>
<feature type="binding site" evidence="1">
    <location>
        <position position="75"/>
    </location>
    <ligand>
        <name>Mg(2+)</name>
        <dbReference type="ChEBI" id="CHEBI:18420"/>
        <label>2</label>
    </ligand>
</feature>
<feature type="binding site" evidence="1">
    <location>
        <position position="147"/>
    </location>
    <ligand>
        <name>Mg(2+)</name>
        <dbReference type="ChEBI" id="CHEBI:18420"/>
        <label>1</label>
    </ligand>
</feature>
<organism>
    <name type="scientific">Azoarcus sp. (strain BH72)</name>
    <dbReference type="NCBI Taxonomy" id="418699"/>
    <lineage>
        <taxon>Bacteria</taxon>
        <taxon>Pseudomonadati</taxon>
        <taxon>Pseudomonadota</taxon>
        <taxon>Betaproteobacteria</taxon>
        <taxon>Rhodocyclales</taxon>
        <taxon>Zoogloeaceae</taxon>
        <taxon>Azoarcus</taxon>
    </lineage>
</organism>
<comment type="function">
    <text evidence="1">The RuvA-RuvB-RuvC complex processes Holliday junction (HJ) DNA during genetic recombination and DNA repair. Endonuclease that resolves HJ intermediates. Cleaves cruciform DNA by making single-stranded nicks across the HJ at symmetrical positions within the homologous arms, yielding a 5'-phosphate and a 3'-hydroxyl group; requires a central core of homology in the junction. The consensus cleavage sequence is 5'-(A/T)TT(C/G)-3'. Cleavage occurs on the 3'-side of the TT dinucleotide at the point of strand exchange. HJ branch migration catalyzed by RuvA-RuvB allows RuvC to scan DNA until it finds its consensus sequence, where it cleaves and resolves the cruciform DNA.</text>
</comment>
<comment type="catalytic activity">
    <reaction evidence="1">
        <text>Endonucleolytic cleavage at a junction such as a reciprocal single-stranded crossover between two homologous DNA duplexes (Holliday junction).</text>
        <dbReference type="EC" id="3.1.21.10"/>
    </reaction>
</comment>
<comment type="cofactor">
    <cofactor evidence="1">
        <name>Mg(2+)</name>
        <dbReference type="ChEBI" id="CHEBI:18420"/>
    </cofactor>
    <text evidence="1">Binds 2 Mg(2+) ion per subunit.</text>
</comment>
<comment type="subunit">
    <text evidence="1">Homodimer which binds Holliday junction (HJ) DNA. The HJ becomes 2-fold symmetrical on binding to RuvC with unstacked arms; it has a different conformation from HJ DNA in complex with RuvA. In the full resolvosome a probable DNA-RuvA(4)-RuvB(12)-RuvC(2) complex forms which resolves the HJ.</text>
</comment>
<comment type="subcellular location">
    <subcellularLocation>
        <location evidence="1">Cytoplasm</location>
    </subcellularLocation>
</comment>
<comment type="similarity">
    <text evidence="1">Belongs to the RuvC family.</text>
</comment>
<reference key="1">
    <citation type="journal article" date="2006" name="Nat. Biotechnol.">
        <title>Complete genome of the mutualistic, N2-fixing grass endophyte Azoarcus sp. strain BH72.</title>
        <authorList>
            <person name="Krause A."/>
            <person name="Ramakumar A."/>
            <person name="Bartels D."/>
            <person name="Battistoni F."/>
            <person name="Bekel T."/>
            <person name="Boch J."/>
            <person name="Boehm M."/>
            <person name="Friedrich F."/>
            <person name="Hurek T."/>
            <person name="Krause L."/>
            <person name="Linke B."/>
            <person name="McHardy A.C."/>
            <person name="Sarkar A."/>
            <person name="Schneiker S."/>
            <person name="Syed A.A."/>
            <person name="Thauer R."/>
            <person name="Vorhoelter F.-J."/>
            <person name="Weidner S."/>
            <person name="Puehler A."/>
            <person name="Reinhold-Hurek B."/>
            <person name="Kaiser O."/>
            <person name="Goesmann A."/>
        </authorList>
    </citation>
    <scope>NUCLEOTIDE SEQUENCE [LARGE SCALE GENOMIC DNA]</scope>
    <source>
        <strain>BH72</strain>
    </source>
</reference>
<protein>
    <recommendedName>
        <fullName evidence="1">Crossover junction endodeoxyribonuclease RuvC</fullName>
        <ecNumber evidence="1">3.1.21.10</ecNumber>
    </recommendedName>
    <alternativeName>
        <fullName evidence="1">Holliday junction nuclease RuvC</fullName>
    </alternativeName>
    <alternativeName>
        <fullName evidence="1">Holliday junction resolvase RuvC</fullName>
    </alternativeName>
</protein>
<name>RUVC_AZOSB</name>
<dbReference type="EC" id="3.1.21.10" evidence="1"/>
<dbReference type="EMBL" id="AM406670">
    <property type="protein sequence ID" value="CAL93188.1"/>
    <property type="molecule type" value="Genomic_DNA"/>
</dbReference>
<dbReference type="RefSeq" id="WP_011764306.1">
    <property type="nucleotide sequence ID" value="NC_008702.1"/>
</dbReference>
<dbReference type="SMR" id="A1K2Y3"/>
<dbReference type="STRING" id="62928.azo0571"/>
<dbReference type="KEGG" id="aoa:dqs_0641"/>
<dbReference type="KEGG" id="azo:azo0571"/>
<dbReference type="eggNOG" id="COG0817">
    <property type="taxonomic scope" value="Bacteria"/>
</dbReference>
<dbReference type="HOGENOM" id="CLU_091257_2_1_4"/>
<dbReference type="OrthoDB" id="9805499at2"/>
<dbReference type="Proteomes" id="UP000002588">
    <property type="component" value="Chromosome"/>
</dbReference>
<dbReference type="GO" id="GO:0005737">
    <property type="term" value="C:cytoplasm"/>
    <property type="evidence" value="ECO:0007669"/>
    <property type="project" value="UniProtKB-SubCell"/>
</dbReference>
<dbReference type="GO" id="GO:0048476">
    <property type="term" value="C:Holliday junction resolvase complex"/>
    <property type="evidence" value="ECO:0007669"/>
    <property type="project" value="UniProtKB-UniRule"/>
</dbReference>
<dbReference type="GO" id="GO:0008821">
    <property type="term" value="F:crossover junction DNA endonuclease activity"/>
    <property type="evidence" value="ECO:0007669"/>
    <property type="project" value="UniProtKB-UniRule"/>
</dbReference>
<dbReference type="GO" id="GO:0003677">
    <property type="term" value="F:DNA binding"/>
    <property type="evidence" value="ECO:0007669"/>
    <property type="project" value="UniProtKB-KW"/>
</dbReference>
<dbReference type="GO" id="GO:0000287">
    <property type="term" value="F:magnesium ion binding"/>
    <property type="evidence" value="ECO:0007669"/>
    <property type="project" value="UniProtKB-UniRule"/>
</dbReference>
<dbReference type="GO" id="GO:0006310">
    <property type="term" value="P:DNA recombination"/>
    <property type="evidence" value="ECO:0007669"/>
    <property type="project" value="UniProtKB-UniRule"/>
</dbReference>
<dbReference type="GO" id="GO:0006281">
    <property type="term" value="P:DNA repair"/>
    <property type="evidence" value="ECO:0007669"/>
    <property type="project" value="UniProtKB-UniRule"/>
</dbReference>
<dbReference type="CDD" id="cd16962">
    <property type="entry name" value="RuvC"/>
    <property type="match status" value="1"/>
</dbReference>
<dbReference type="FunFam" id="3.30.420.10:FF:000002">
    <property type="entry name" value="Crossover junction endodeoxyribonuclease RuvC"/>
    <property type="match status" value="1"/>
</dbReference>
<dbReference type="Gene3D" id="3.30.420.10">
    <property type="entry name" value="Ribonuclease H-like superfamily/Ribonuclease H"/>
    <property type="match status" value="1"/>
</dbReference>
<dbReference type="HAMAP" id="MF_00034">
    <property type="entry name" value="RuvC"/>
    <property type="match status" value="1"/>
</dbReference>
<dbReference type="InterPro" id="IPR012337">
    <property type="entry name" value="RNaseH-like_sf"/>
</dbReference>
<dbReference type="InterPro" id="IPR036397">
    <property type="entry name" value="RNaseH_sf"/>
</dbReference>
<dbReference type="InterPro" id="IPR020563">
    <property type="entry name" value="X-over_junc_endoDNase_Mg_BS"/>
</dbReference>
<dbReference type="InterPro" id="IPR002176">
    <property type="entry name" value="X-over_junc_endoDNase_RuvC"/>
</dbReference>
<dbReference type="NCBIfam" id="TIGR00228">
    <property type="entry name" value="ruvC"/>
    <property type="match status" value="1"/>
</dbReference>
<dbReference type="PANTHER" id="PTHR30194">
    <property type="entry name" value="CROSSOVER JUNCTION ENDODEOXYRIBONUCLEASE RUVC"/>
    <property type="match status" value="1"/>
</dbReference>
<dbReference type="PANTHER" id="PTHR30194:SF3">
    <property type="entry name" value="CROSSOVER JUNCTION ENDODEOXYRIBONUCLEASE RUVC"/>
    <property type="match status" value="1"/>
</dbReference>
<dbReference type="Pfam" id="PF02075">
    <property type="entry name" value="RuvC"/>
    <property type="match status" value="1"/>
</dbReference>
<dbReference type="PRINTS" id="PR00696">
    <property type="entry name" value="RSOLVASERUVC"/>
</dbReference>
<dbReference type="SUPFAM" id="SSF53098">
    <property type="entry name" value="Ribonuclease H-like"/>
    <property type="match status" value="1"/>
</dbReference>
<dbReference type="PROSITE" id="PS01321">
    <property type="entry name" value="RUVC"/>
    <property type="match status" value="1"/>
</dbReference>
<keyword id="KW-0963">Cytoplasm</keyword>
<keyword id="KW-0227">DNA damage</keyword>
<keyword id="KW-0233">DNA recombination</keyword>
<keyword id="KW-0234">DNA repair</keyword>
<keyword id="KW-0238">DNA-binding</keyword>
<keyword id="KW-0255">Endonuclease</keyword>
<keyword id="KW-0378">Hydrolase</keyword>
<keyword id="KW-0460">Magnesium</keyword>
<keyword id="KW-0479">Metal-binding</keyword>
<keyword id="KW-0540">Nuclease</keyword>
<keyword id="KW-1185">Reference proteome</keyword>
<gene>
    <name evidence="1" type="primary">ruvC</name>
    <name type="ordered locus">azo0571</name>
</gene>
<evidence type="ECO:0000255" key="1">
    <source>
        <dbReference type="HAMAP-Rule" id="MF_00034"/>
    </source>
</evidence>
<proteinExistence type="inferred from homology"/>
<sequence>MSSAGRIVATRILGLDPGLRITGFGVIDTLGSQLRYVASGCIKTRDGELPGRLKTLLDGVREVIATYQPDAVAVEKVFVNVNPQSTLLLGQARGAVICGAVSCDLPVAEYTALQVKQSVVGYGKAAKEQVQHMVQRLLALDASPGPDAADALACAICHAHGGQGLGGQAGIGGRRRAGRILSL</sequence>
<accession>A1K2Y3</accession>